<reference key="1">
    <citation type="journal article" date="2009" name="PLoS Genet.">
        <title>Organised genome dynamics in the Escherichia coli species results in highly diverse adaptive paths.</title>
        <authorList>
            <person name="Touchon M."/>
            <person name="Hoede C."/>
            <person name="Tenaillon O."/>
            <person name="Barbe V."/>
            <person name="Baeriswyl S."/>
            <person name="Bidet P."/>
            <person name="Bingen E."/>
            <person name="Bonacorsi S."/>
            <person name="Bouchier C."/>
            <person name="Bouvet O."/>
            <person name="Calteau A."/>
            <person name="Chiapello H."/>
            <person name="Clermont O."/>
            <person name="Cruveiller S."/>
            <person name="Danchin A."/>
            <person name="Diard M."/>
            <person name="Dossat C."/>
            <person name="Karoui M.E."/>
            <person name="Frapy E."/>
            <person name="Garry L."/>
            <person name="Ghigo J.M."/>
            <person name="Gilles A.M."/>
            <person name="Johnson J."/>
            <person name="Le Bouguenec C."/>
            <person name="Lescat M."/>
            <person name="Mangenot S."/>
            <person name="Martinez-Jehanne V."/>
            <person name="Matic I."/>
            <person name="Nassif X."/>
            <person name="Oztas S."/>
            <person name="Petit M.A."/>
            <person name="Pichon C."/>
            <person name="Rouy Z."/>
            <person name="Ruf C.S."/>
            <person name="Schneider D."/>
            <person name="Tourret J."/>
            <person name="Vacherie B."/>
            <person name="Vallenet D."/>
            <person name="Medigue C."/>
            <person name="Rocha E.P.C."/>
            <person name="Denamur E."/>
        </authorList>
    </citation>
    <scope>NUCLEOTIDE SEQUENCE [LARGE SCALE GENOMIC DNA]</scope>
    <source>
        <strain>UMN026 / ExPEC</strain>
    </source>
</reference>
<name>PROA_ECOLU</name>
<gene>
    <name evidence="1" type="primary">proA</name>
    <name type="ordered locus">ECUMN_0309</name>
</gene>
<sequence length="417" mass="44618">MLEQMGIAAKQASYKLAQLSSREKNRVLEKIADELEAQSEIILNANAQDVADARANGLSEAMLDRLALTPARLKGIADDVRQVCNLADPVGQVIDGGVLDSGLRLERRRVPLGVIGVIYEARPNVTVDVASLCLKTGNAVILRGGKETCRTNAATVAVIQDALKSCGLPAGAVQAIDNPDRALVSEMLRMDKYIDMLIPRGGAGLHKLCREQSTIPVITGGIGVCHIYVDESAEIAEALKVIVNAKTQRPSTCNTVETLLVNKNIADSFLPALSKQMAESGVTLHADAGALAQLQTGPAKVVAVKAEEYDDEFLSLDLNVKIVSDLDDAIAHIREHGTQHSDAILTRDMRNAQRFVNEVDSSAVYVNASTRFTDGGQFGLGAEVAVSTQKLHARGPMGLEALTTYKWIGIGDYTIRA</sequence>
<accession>B7N8H4</accession>
<protein>
    <recommendedName>
        <fullName evidence="1">Gamma-glutamyl phosphate reductase</fullName>
        <shortName evidence="1">GPR</shortName>
        <ecNumber evidence="1">1.2.1.41</ecNumber>
    </recommendedName>
    <alternativeName>
        <fullName evidence="1">Glutamate-5-semialdehyde dehydrogenase</fullName>
    </alternativeName>
    <alternativeName>
        <fullName evidence="1">Glutamyl-gamma-semialdehyde dehydrogenase</fullName>
        <shortName evidence="1">GSA dehydrogenase</shortName>
    </alternativeName>
</protein>
<organism>
    <name type="scientific">Escherichia coli O17:K52:H18 (strain UMN026 / ExPEC)</name>
    <dbReference type="NCBI Taxonomy" id="585056"/>
    <lineage>
        <taxon>Bacteria</taxon>
        <taxon>Pseudomonadati</taxon>
        <taxon>Pseudomonadota</taxon>
        <taxon>Gammaproteobacteria</taxon>
        <taxon>Enterobacterales</taxon>
        <taxon>Enterobacteriaceae</taxon>
        <taxon>Escherichia</taxon>
    </lineage>
</organism>
<dbReference type="EC" id="1.2.1.41" evidence="1"/>
<dbReference type="EMBL" id="CU928163">
    <property type="protein sequence ID" value="CAR11524.1"/>
    <property type="molecule type" value="Genomic_DNA"/>
</dbReference>
<dbReference type="RefSeq" id="WP_000893268.1">
    <property type="nucleotide sequence ID" value="NC_011751.1"/>
</dbReference>
<dbReference type="RefSeq" id="YP_002411078.1">
    <property type="nucleotide sequence ID" value="NC_011751.1"/>
</dbReference>
<dbReference type="SMR" id="B7N8H4"/>
<dbReference type="STRING" id="585056.ECUMN_0309"/>
<dbReference type="KEGG" id="eum:ECUMN_0309"/>
<dbReference type="PATRIC" id="fig|585056.7.peg.504"/>
<dbReference type="HOGENOM" id="CLU_030231_0_0_6"/>
<dbReference type="UniPathway" id="UPA00098">
    <property type="reaction ID" value="UER00360"/>
</dbReference>
<dbReference type="Proteomes" id="UP000007097">
    <property type="component" value="Chromosome"/>
</dbReference>
<dbReference type="GO" id="GO:0005737">
    <property type="term" value="C:cytoplasm"/>
    <property type="evidence" value="ECO:0007669"/>
    <property type="project" value="UniProtKB-SubCell"/>
</dbReference>
<dbReference type="GO" id="GO:0004350">
    <property type="term" value="F:glutamate-5-semialdehyde dehydrogenase activity"/>
    <property type="evidence" value="ECO:0007669"/>
    <property type="project" value="UniProtKB-UniRule"/>
</dbReference>
<dbReference type="GO" id="GO:0050661">
    <property type="term" value="F:NADP binding"/>
    <property type="evidence" value="ECO:0007669"/>
    <property type="project" value="InterPro"/>
</dbReference>
<dbReference type="GO" id="GO:0055129">
    <property type="term" value="P:L-proline biosynthetic process"/>
    <property type="evidence" value="ECO:0007669"/>
    <property type="project" value="UniProtKB-UniRule"/>
</dbReference>
<dbReference type="CDD" id="cd07079">
    <property type="entry name" value="ALDH_F18-19_ProA-GPR"/>
    <property type="match status" value="1"/>
</dbReference>
<dbReference type="FunFam" id="3.40.309.10:FF:000006">
    <property type="entry name" value="Gamma-glutamyl phosphate reductase"/>
    <property type="match status" value="1"/>
</dbReference>
<dbReference type="Gene3D" id="3.40.605.10">
    <property type="entry name" value="Aldehyde Dehydrogenase, Chain A, domain 1"/>
    <property type="match status" value="1"/>
</dbReference>
<dbReference type="Gene3D" id="3.40.309.10">
    <property type="entry name" value="Aldehyde Dehydrogenase, Chain A, domain 2"/>
    <property type="match status" value="1"/>
</dbReference>
<dbReference type="HAMAP" id="MF_00412">
    <property type="entry name" value="ProA"/>
    <property type="match status" value="1"/>
</dbReference>
<dbReference type="InterPro" id="IPR016161">
    <property type="entry name" value="Ald_DH/histidinol_DH"/>
</dbReference>
<dbReference type="InterPro" id="IPR016163">
    <property type="entry name" value="Ald_DH_C"/>
</dbReference>
<dbReference type="InterPro" id="IPR016162">
    <property type="entry name" value="Ald_DH_N"/>
</dbReference>
<dbReference type="InterPro" id="IPR015590">
    <property type="entry name" value="Aldehyde_DH_dom"/>
</dbReference>
<dbReference type="InterPro" id="IPR020593">
    <property type="entry name" value="G-glutamylP_reductase_CS"/>
</dbReference>
<dbReference type="InterPro" id="IPR012134">
    <property type="entry name" value="Glu-5-SA_DH"/>
</dbReference>
<dbReference type="InterPro" id="IPR000965">
    <property type="entry name" value="GPR_dom"/>
</dbReference>
<dbReference type="NCBIfam" id="NF001221">
    <property type="entry name" value="PRK00197.1"/>
    <property type="match status" value="1"/>
</dbReference>
<dbReference type="NCBIfam" id="TIGR00407">
    <property type="entry name" value="proA"/>
    <property type="match status" value="1"/>
</dbReference>
<dbReference type="PANTHER" id="PTHR11063:SF8">
    <property type="entry name" value="DELTA-1-PYRROLINE-5-CARBOXYLATE SYNTHASE"/>
    <property type="match status" value="1"/>
</dbReference>
<dbReference type="PANTHER" id="PTHR11063">
    <property type="entry name" value="GLUTAMATE SEMIALDEHYDE DEHYDROGENASE"/>
    <property type="match status" value="1"/>
</dbReference>
<dbReference type="Pfam" id="PF00171">
    <property type="entry name" value="Aldedh"/>
    <property type="match status" value="1"/>
</dbReference>
<dbReference type="PIRSF" id="PIRSF000151">
    <property type="entry name" value="GPR"/>
    <property type="match status" value="1"/>
</dbReference>
<dbReference type="SUPFAM" id="SSF53720">
    <property type="entry name" value="ALDH-like"/>
    <property type="match status" value="1"/>
</dbReference>
<dbReference type="PROSITE" id="PS01223">
    <property type="entry name" value="PROA"/>
    <property type="match status" value="1"/>
</dbReference>
<feature type="chain" id="PRO_1000193608" description="Gamma-glutamyl phosphate reductase">
    <location>
        <begin position="1"/>
        <end position="417"/>
    </location>
</feature>
<evidence type="ECO:0000255" key="1">
    <source>
        <dbReference type="HAMAP-Rule" id="MF_00412"/>
    </source>
</evidence>
<comment type="function">
    <text evidence="1">Catalyzes the NADPH-dependent reduction of L-glutamate 5-phosphate into L-glutamate 5-semialdehyde and phosphate. The product spontaneously undergoes cyclization to form 1-pyrroline-5-carboxylate.</text>
</comment>
<comment type="catalytic activity">
    <reaction evidence="1">
        <text>L-glutamate 5-semialdehyde + phosphate + NADP(+) = L-glutamyl 5-phosphate + NADPH + H(+)</text>
        <dbReference type="Rhea" id="RHEA:19541"/>
        <dbReference type="ChEBI" id="CHEBI:15378"/>
        <dbReference type="ChEBI" id="CHEBI:43474"/>
        <dbReference type="ChEBI" id="CHEBI:57783"/>
        <dbReference type="ChEBI" id="CHEBI:58066"/>
        <dbReference type="ChEBI" id="CHEBI:58274"/>
        <dbReference type="ChEBI" id="CHEBI:58349"/>
        <dbReference type="EC" id="1.2.1.41"/>
    </reaction>
</comment>
<comment type="pathway">
    <text evidence="1">Amino-acid biosynthesis; L-proline biosynthesis; L-glutamate 5-semialdehyde from L-glutamate: step 2/2.</text>
</comment>
<comment type="subcellular location">
    <subcellularLocation>
        <location evidence="1">Cytoplasm</location>
    </subcellularLocation>
</comment>
<comment type="similarity">
    <text evidence="1">Belongs to the gamma-glutamyl phosphate reductase family.</text>
</comment>
<proteinExistence type="inferred from homology"/>
<keyword id="KW-0028">Amino-acid biosynthesis</keyword>
<keyword id="KW-0963">Cytoplasm</keyword>
<keyword id="KW-0521">NADP</keyword>
<keyword id="KW-0560">Oxidoreductase</keyword>
<keyword id="KW-0641">Proline biosynthesis</keyword>